<accession>A4QAP0</accession>
<sequence length="616" mass="68227">MSPNDAFISAPAKIETPVGPRNEGQPAWNKQRGSSMPVNRYMPFEVEVEDISLPDRTWPDKKITVAPQWCAVDLRDGNQALIDPMSPERKRRMFELLVQMGFKEIEVGFPSASQTDFDFVREIIEKDMIPDDVTIQVLVQAREHLIRRTFEACEGAKNVIVHFYNSTSILQRNVVFRMDKDQVKKLATDAAELIKTIAQDYPDTNWRWQYSPESFTGTEVEYAKEVVDAVVEVMDPTPENPMIINLPSTVEMITPNVYADSIEWMHRNVNRRDSIILSLHPHNDRGTGVGAAELGYMAGADRIEGCLFGNGERTGNVCLVTLALNMLTQGVDPQLDFTDIRQIRSTVEYCNQLRVPERHPYAGDLVFTAFSGSHQDAVNKGLDAMAAKVKPGANSTDVSWEELRDTEWEVPYLPIDPKDVGRDYEAVIRVNSQSGKGGVAYIMKTDHGLQIPRSMQVEFSAVVQNVTDAEGGEVNSKAMWDIFATEYLERTAPVEQIALRVENAQTENEDASITAELIHNGKDVTVDGHGNGPLAAYANALEKLGIDVEIQEYNQHARTSGDDAEAAAYVLAEVNGRKVWGVGIAGSITYASLKAVTSAVNRALDVNHEAVLAGGV</sequence>
<comment type="function">
    <text evidence="1">Catalyzes the condensation of the acetyl group of acetyl-CoA with 3-methyl-2-oxobutanoate (2-ketoisovalerate) to form 3-carboxy-3-hydroxy-4-methylpentanoate (2-isopropylmalate).</text>
</comment>
<comment type="catalytic activity">
    <reaction evidence="1">
        <text>3-methyl-2-oxobutanoate + acetyl-CoA + H2O = (2S)-2-isopropylmalate + CoA + H(+)</text>
        <dbReference type="Rhea" id="RHEA:21524"/>
        <dbReference type="ChEBI" id="CHEBI:1178"/>
        <dbReference type="ChEBI" id="CHEBI:11851"/>
        <dbReference type="ChEBI" id="CHEBI:15377"/>
        <dbReference type="ChEBI" id="CHEBI:15378"/>
        <dbReference type="ChEBI" id="CHEBI:57287"/>
        <dbReference type="ChEBI" id="CHEBI:57288"/>
        <dbReference type="EC" id="2.3.3.13"/>
    </reaction>
</comment>
<comment type="cofactor">
    <cofactor evidence="1">
        <name>Mg(2+)</name>
        <dbReference type="ChEBI" id="CHEBI:18420"/>
    </cofactor>
</comment>
<comment type="pathway">
    <text evidence="1">Amino-acid biosynthesis; L-leucine biosynthesis; L-leucine from 3-methyl-2-oxobutanoate: step 1/4.</text>
</comment>
<comment type="subunit">
    <text evidence="1">Homodimer.</text>
</comment>
<comment type="subcellular location">
    <subcellularLocation>
        <location evidence="1">Cytoplasm</location>
    </subcellularLocation>
</comment>
<comment type="similarity">
    <text evidence="1">Belongs to the alpha-IPM synthase/homocitrate synthase family. LeuA type 2 subfamily.</text>
</comment>
<gene>
    <name evidence="1" type="primary">leuA</name>
    <name type="ordered locus">cgR_0323</name>
</gene>
<protein>
    <recommendedName>
        <fullName evidence="1">2-isopropylmalate synthase</fullName>
        <ecNumber evidence="1">2.3.3.13</ecNumber>
    </recommendedName>
    <alternativeName>
        <fullName evidence="1">Alpha-IPM synthase</fullName>
    </alternativeName>
    <alternativeName>
        <fullName evidence="1">Alpha-isopropylmalate synthase</fullName>
    </alternativeName>
</protein>
<dbReference type="EC" id="2.3.3.13" evidence="1"/>
<dbReference type="EMBL" id="AP009044">
    <property type="protein sequence ID" value="BAF53287.1"/>
    <property type="molecule type" value="Genomic_DNA"/>
</dbReference>
<dbReference type="RefSeq" id="WP_011896569.1">
    <property type="nucleotide sequence ID" value="NC_009342.1"/>
</dbReference>
<dbReference type="SMR" id="A4QAP0"/>
<dbReference type="KEGG" id="cgt:cgR_0323"/>
<dbReference type="HOGENOM" id="CLU_004588_3_2_11"/>
<dbReference type="PhylomeDB" id="A4QAP0"/>
<dbReference type="UniPathway" id="UPA00048">
    <property type="reaction ID" value="UER00070"/>
</dbReference>
<dbReference type="Proteomes" id="UP000006698">
    <property type="component" value="Chromosome"/>
</dbReference>
<dbReference type="GO" id="GO:0005737">
    <property type="term" value="C:cytoplasm"/>
    <property type="evidence" value="ECO:0007669"/>
    <property type="project" value="UniProtKB-SubCell"/>
</dbReference>
<dbReference type="GO" id="GO:0003852">
    <property type="term" value="F:2-isopropylmalate synthase activity"/>
    <property type="evidence" value="ECO:0007669"/>
    <property type="project" value="UniProtKB-UniRule"/>
</dbReference>
<dbReference type="GO" id="GO:0003985">
    <property type="term" value="F:acetyl-CoA C-acetyltransferase activity"/>
    <property type="evidence" value="ECO:0007669"/>
    <property type="project" value="UniProtKB-UniRule"/>
</dbReference>
<dbReference type="GO" id="GO:0000287">
    <property type="term" value="F:magnesium ion binding"/>
    <property type="evidence" value="ECO:0007669"/>
    <property type="project" value="UniProtKB-UniRule"/>
</dbReference>
<dbReference type="GO" id="GO:0009098">
    <property type="term" value="P:L-leucine biosynthetic process"/>
    <property type="evidence" value="ECO:0007669"/>
    <property type="project" value="UniProtKB-UniRule"/>
</dbReference>
<dbReference type="CDD" id="cd07942">
    <property type="entry name" value="DRE_TIM_LeuA"/>
    <property type="match status" value="1"/>
</dbReference>
<dbReference type="FunFam" id="3.20.20.70:FF:000045">
    <property type="entry name" value="2-isopropylmalate synthase"/>
    <property type="match status" value="1"/>
</dbReference>
<dbReference type="Gene3D" id="3.30.160.270">
    <property type="match status" value="1"/>
</dbReference>
<dbReference type="Gene3D" id="3.20.20.70">
    <property type="entry name" value="Aldolase class I"/>
    <property type="match status" value="1"/>
</dbReference>
<dbReference type="HAMAP" id="MF_00572">
    <property type="entry name" value="LeuA_type2"/>
    <property type="match status" value="1"/>
</dbReference>
<dbReference type="InterPro" id="IPR013709">
    <property type="entry name" value="2-isopropylmalate_synth_dimer"/>
</dbReference>
<dbReference type="InterPro" id="IPR002034">
    <property type="entry name" value="AIPM/Hcit_synth_CS"/>
</dbReference>
<dbReference type="InterPro" id="IPR013785">
    <property type="entry name" value="Aldolase_TIM"/>
</dbReference>
<dbReference type="InterPro" id="IPR005668">
    <property type="entry name" value="IPM_Synthase"/>
</dbReference>
<dbReference type="InterPro" id="IPR054692">
    <property type="entry name" value="LeuA-like_post-cat"/>
</dbReference>
<dbReference type="InterPro" id="IPR036230">
    <property type="entry name" value="LeuA_allosteric_dom_sf"/>
</dbReference>
<dbReference type="InterPro" id="IPR039371">
    <property type="entry name" value="LeuA_N_DRE-TIM"/>
</dbReference>
<dbReference type="InterPro" id="IPR000891">
    <property type="entry name" value="PYR_CT"/>
</dbReference>
<dbReference type="NCBIfam" id="TIGR00970">
    <property type="entry name" value="leuA_yeast"/>
    <property type="match status" value="1"/>
</dbReference>
<dbReference type="NCBIfam" id="NF002991">
    <property type="entry name" value="PRK03739.1"/>
    <property type="match status" value="1"/>
</dbReference>
<dbReference type="PANTHER" id="PTHR46911">
    <property type="match status" value="1"/>
</dbReference>
<dbReference type="PANTHER" id="PTHR46911:SF1">
    <property type="entry name" value="2-ISOPROPYLMALATE SYNTHASE"/>
    <property type="match status" value="1"/>
</dbReference>
<dbReference type="Pfam" id="PF00682">
    <property type="entry name" value="HMGL-like"/>
    <property type="match status" value="1"/>
</dbReference>
<dbReference type="Pfam" id="PF22615">
    <property type="entry name" value="IPMS_D2"/>
    <property type="match status" value="1"/>
</dbReference>
<dbReference type="Pfam" id="PF08502">
    <property type="entry name" value="LeuA_dimer"/>
    <property type="match status" value="1"/>
</dbReference>
<dbReference type="SMART" id="SM00917">
    <property type="entry name" value="LeuA_dimer"/>
    <property type="match status" value="1"/>
</dbReference>
<dbReference type="SUPFAM" id="SSF110921">
    <property type="entry name" value="2-isopropylmalate synthase LeuA, allosteric (dimerisation) domain"/>
    <property type="match status" value="1"/>
</dbReference>
<dbReference type="SUPFAM" id="SSF51569">
    <property type="entry name" value="Aldolase"/>
    <property type="match status" value="1"/>
</dbReference>
<dbReference type="SUPFAM" id="SSF89000">
    <property type="entry name" value="post-HMGL domain-like"/>
    <property type="match status" value="1"/>
</dbReference>
<dbReference type="PROSITE" id="PS00815">
    <property type="entry name" value="AIPM_HOMOCIT_SYNTH_1"/>
    <property type="match status" value="1"/>
</dbReference>
<dbReference type="PROSITE" id="PS00816">
    <property type="entry name" value="AIPM_HOMOCIT_SYNTH_2"/>
    <property type="match status" value="1"/>
</dbReference>
<dbReference type="PROSITE" id="PS50991">
    <property type="entry name" value="PYR_CT"/>
    <property type="match status" value="1"/>
</dbReference>
<keyword id="KW-0028">Amino-acid biosynthesis</keyword>
<keyword id="KW-0100">Branched-chain amino acid biosynthesis</keyword>
<keyword id="KW-0963">Cytoplasm</keyword>
<keyword id="KW-0432">Leucine biosynthesis</keyword>
<keyword id="KW-0460">Magnesium</keyword>
<keyword id="KW-0479">Metal-binding</keyword>
<keyword id="KW-0808">Transferase</keyword>
<reference key="1">
    <citation type="journal article" date="2007" name="Microbiology">
        <title>Comparative analysis of the Corynebacterium glutamicum group and complete genome sequence of strain R.</title>
        <authorList>
            <person name="Yukawa H."/>
            <person name="Omumasaba C.A."/>
            <person name="Nonaka H."/>
            <person name="Kos P."/>
            <person name="Okai N."/>
            <person name="Suzuki N."/>
            <person name="Suda M."/>
            <person name="Tsuge Y."/>
            <person name="Watanabe J."/>
            <person name="Ikeda Y."/>
            <person name="Vertes A.A."/>
            <person name="Inui M."/>
        </authorList>
    </citation>
    <scope>NUCLEOTIDE SEQUENCE [LARGE SCALE GENOMIC DNA]</scope>
    <source>
        <strain>R</strain>
    </source>
</reference>
<name>LEU1_CORGB</name>
<evidence type="ECO:0000255" key="1">
    <source>
        <dbReference type="HAMAP-Rule" id="MF_00572"/>
    </source>
</evidence>
<evidence type="ECO:0000256" key="2">
    <source>
        <dbReference type="SAM" id="MobiDB-lite"/>
    </source>
</evidence>
<proteinExistence type="inferred from homology"/>
<feature type="chain" id="PRO_1000025029" description="2-isopropylmalate synthase">
    <location>
        <begin position="1"/>
        <end position="616"/>
    </location>
</feature>
<feature type="domain" description="Pyruvate carboxyltransferase" evidence="1">
    <location>
        <begin position="67"/>
        <end position="341"/>
    </location>
</feature>
<feature type="region of interest" description="Disordered" evidence="2">
    <location>
        <begin position="1"/>
        <end position="34"/>
    </location>
</feature>
<feature type="region of interest" description="Regulatory domain" evidence="1">
    <location>
        <begin position="490"/>
        <end position="616"/>
    </location>
</feature>
<feature type="binding site" evidence="1">
    <location>
        <position position="76"/>
    </location>
    <ligand>
        <name>Mg(2+)</name>
        <dbReference type="ChEBI" id="CHEBI:18420"/>
    </ligand>
</feature>
<feature type="binding site" evidence="1">
    <location>
        <position position="280"/>
    </location>
    <ligand>
        <name>Mg(2+)</name>
        <dbReference type="ChEBI" id="CHEBI:18420"/>
    </ligand>
</feature>
<feature type="binding site" evidence="1">
    <location>
        <position position="282"/>
    </location>
    <ligand>
        <name>Mg(2+)</name>
        <dbReference type="ChEBI" id="CHEBI:18420"/>
    </ligand>
</feature>
<feature type="binding site" evidence="1">
    <location>
        <position position="316"/>
    </location>
    <ligand>
        <name>Mg(2+)</name>
        <dbReference type="ChEBI" id="CHEBI:18420"/>
    </ligand>
</feature>
<organism>
    <name type="scientific">Corynebacterium glutamicum (strain R)</name>
    <dbReference type="NCBI Taxonomy" id="340322"/>
    <lineage>
        <taxon>Bacteria</taxon>
        <taxon>Bacillati</taxon>
        <taxon>Actinomycetota</taxon>
        <taxon>Actinomycetes</taxon>
        <taxon>Mycobacteriales</taxon>
        <taxon>Corynebacteriaceae</taxon>
        <taxon>Corynebacterium</taxon>
    </lineage>
</organism>